<evidence type="ECO:0000250" key="1">
    <source>
        <dbReference type="UniProtKB" id="P0C1D0"/>
    </source>
</evidence>
<evidence type="ECO:0000250" key="2">
    <source>
        <dbReference type="UniProtKB" id="P50983"/>
    </source>
</evidence>
<evidence type="ECO:0000269" key="3">
    <source>
    </source>
</evidence>
<evidence type="ECO:0000269" key="4">
    <source>
    </source>
</evidence>
<evidence type="ECO:0000303" key="5">
    <source>
    </source>
</evidence>
<evidence type="ECO:0000305" key="6"/>
<evidence type="ECO:0000305" key="7">
    <source>
    </source>
</evidence>
<dbReference type="EMBL" id="AY159317">
    <property type="protein sequence ID" value="AAN78127.1"/>
    <property type="molecule type" value="Genomic_DNA"/>
</dbReference>
<dbReference type="ConoServer" id="92">
    <property type="toxin name" value="ImII precursor"/>
</dbReference>
<dbReference type="GO" id="GO:0005576">
    <property type="term" value="C:extracellular region"/>
    <property type="evidence" value="ECO:0007669"/>
    <property type="project" value="UniProtKB-SubCell"/>
</dbReference>
<dbReference type="GO" id="GO:0035792">
    <property type="term" value="C:host cell postsynaptic membrane"/>
    <property type="evidence" value="ECO:0007669"/>
    <property type="project" value="UniProtKB-KW"/>
</dbReference>
<dbReference type="GO" id="GO:0030550">
    <property type="term" value="F:acetylcholine receptor inhibitor activity"/>
    <property type="evidence" value="ECO:0007669"/>
    <property type="project" value="UniProtKB-KW"/>
</dbReference>
<dbReference type="GO" id="GO:0099106">
    <property type="term" value="F:ion channel regulator activity"/>
    <property type="evidence" value="ECO:0007669"/>
    <property type="project" value="UniProtKB-KW"/>
</dbReference>
<dbReference type="GO" id="GO:0090729">
    <property type="term" value="F:toxin activity"/>
    <property type="evidence" value="ECO:0007669"/>
    <property type="project" value="UniProtKB-KW"/>
</dbReference>
<dbReference type="PROSITE" id="PS60014">
    <property type="entry name" value="ALPHA_CONOTOXIN"/>
    <property type="match status" value="1"/>
</dbReference>
<feature type="propeptide" id="PRO_0000388685" evidence="7">
    <location>
        <begin position="1" status="less than"/>
        <end position="4"/>
    </location>
</feature>
<feature type="peptide" id="PRO_0000034878" description="Alpha-conotoxin ImII" evidence="7">
    <location>
        <begin position="5"/>
        <end position="16"/>
    </location>
</feature>
<feature type="modified residue" description="Cysteine amide" evidence="7">
    <location>
        <position position="16"/>
    </location>
</feature>
<feature type="disulfide bond" evidence="1 7">
    <location>
        <begin position="6"/>
        <end position="12"/>
    </location>
</feature>
<feature type="disulfide bond" evidence="1 7">
    <location>
        <begin position="7"/>
        <end position="16"/>
    </location>
</feature>
<feature type="mutagenesis site" description="Gain of ability to compete with alpha-bungarotoxin." evidence="3">
    <original>R</original>
    <variation>P</variation>
    <location>
        <position position="10"/>
    </location>
</feature>
<feature type="non-terminal residue">
    <location>
        <position position="1"/>
    </location>
</feature>
<proteinExistence type="evidence at protein level"/>
<organism>
    <name type="scientific">Conus imperialis</name>
    <name type="common">Imperial cone</name>
    <dbReference type="NCBI Taxonomy" id="35631"/>
    <lineage>
        <taxon>Eukaryota</taxon>
        <taxon>Metazoa</taxon>
        <taxon>Spiralia</taxon>
        <taxon>Lophotrochozoa</taxon>
        <taxon>Mollusca</taxon>
        <taxon>Gastropoda</taxon>
        <taxon>Caenogastropoda</taxon>
        <taxon>Neogastropoda</taxon>
        <taxon>Conoidea</taxon>
        <taxon>Conidae</taxon>
        <taxon>Conus</taxon>
        <taxon>Stephanoconus</taxon>
    </lineage>
</organism>
<name>CA12_CONIM</name>
<reference key="1">
    <citation type="journal article" date="2003" name="J. Biol. Chem.">
        <title>Alpha-conotoxins ImI and ImII: similar alpha 7 nicotinic receptor antagonists act at different sites.</title>
        <authorList>
            <person name="Ellison M.A."/>
            <person name="McIntosh J.M."/>
            <person name="Olivera B.M."/>
        </authorList>
    </citation>
    <scope>NUCLEOTIDE SEQUENCE [GENOMIC DNA]</scope>
    <scope>SYNTHESIS OF 5-16</scope>
    <scope>FUNCTION</scope>
    <scope>MUTAGENESIS OF ARG-10</scope>
    <source>
        <tissue>Venom duct</tissue>
    </source>
</reference>
<reference key="2">
    <citation type="journal article" date="2004" name="Biochemistry">
        <title>Alpha-conotoxins ImI and ImII target distinct regions of the human alpha7 nicotinic acetylcholine receptor and distinguish human nicotinic receptor subtypes.</title>
        <authorList>
            <person name="Ellison M."/>
            <person name="Gao F."/>
            <person name="Wang H.L."/>
            <person name="Sine S.M."/>
            <person name="McIntosh J.M."/>
            <person name="Olivera B.M."/>
        </authorList>
    </citation>
    <scope>FUNCTION</scope>
    <scope>AMIDATION AT CYS-16</scope>
    <scope>SYNTHESIS OF 5-16</scope>
</reference>
<accession>Q8I6R5</accession>
<keyword id="KW-0008">Acetylcholine receptor inhibiting toxin</keyword>
<keyword id="KW-0027">Amidation</keyword>
<keyword id="KW-0165">Cleavage on pair of basic residues</keyword>
<keyword id="KW-1015">Disulfide bond</keyword>
<keyword id="KW-0872">Ion channel impairing toxin</keyword>
<keyword id="KW-0528">Neurotoxin</keyword>
<keyword id="KW-0629">Postsynaptic neurotoxin</keyword>
<keyword id="KW-0964">Secreted</keyword>
<keyword id="KW-0800">Toxin</keyword>
<protein>
    <recommendedName>
        <fullName evidence="5">Alpha-conotoxin ImII</fullName>
        <shortName evidence="5">Alpha-CTx ImII</shortName>
    </recommendedName>
</protein>
<comment type="function">
    <text evidence="3 4">Alpha-conotoxins act on postsynaptic membranes, they bind to the nicotinic acetylcholine receptors (nAChR) and thus inhibit them. This toxin blocks neuronal mammalian alpha-7 (human and rat) and alpha-3/beta-2 (human) and muscle alpha-1-beta-1-delta-epsilon (human) nAChRs (PubMed:12384509, PubMed:15609996). Acts voltage-independently (PubMed:12384509). Does not compete with alpha-bungarotoxin for binding to the receptor (PubMed:12384509, PubMed:15609996). Binds to a different site than alpha-conotoxin ImI (PubMed:15609996).</text>
</comment>
<comment type="subcellular location">
    <subcellularLocation>
        <location evidence="2">Secreted</location>
    </subcellularLocation>
</comment>
<comment type="tissue specificity">
    <text evidence="6">Expressed by the venom duct.</text>
</comment>
<comment type="domain">
    <text evidence="6">The cysteine framework is I (CC-C-C). Alpha4/3 pattern.</text>
</comment>
<comment type="miscellaneous">
    <text evidence="4">Negative results: does not inhibit alpha-2-beta-2, alpha-2-beta-4, alpha-3-beta-4, alpha-4-beta-2, alpha-4-beta-2 nAChRs.</text>
</comment>
<comment type="similarity">
    <text evidence="6">Belongs to the conotoxin A superfamily.</text>
</comment>
<sequence length="17" mass="2096">IVRRACCSDRRCRWRCG</sequence>